<gene>
    <name evidence="1" type="primary">rplW</name>
    <name type="ordered locus">Lxx20310</name>
</gene>
<evidence type="ECO:0000255" key="1">
    <source>
        <dbReference type="HAMAP-Rule" id="MF_01369"/>
    </source>
</evidence>
<evidence type="ECO:0000305" key="2"/>
<name>RL23_LEIXX</name>
<dbReference type="EMBL" id="AE016822">
    <property type="protein sequence ID" value="AAT89747.1"/>
    <property type="molecule type" value="Genomic_DNA"/>
</dbReference>
<dbReference type="RefSeq" id="WP_011186733.1">
    <property type="nucleotide sequence ID" value="NC_006087.1"/>
</dbReference>
<dbReference type="SMR" id="Q6ACZ7"/>
<dbReference type="STRING" id="281090.Lxx20310"/>
<dbReference type="KEGG" id="lxx:Lxx20310"/>
<dbReference type="eggNOG" id="COG0089">
    <property type="taxonomic scope" value="Bacteria"/>
</dbReference>
<dbReference type="HOGENOM" id="CLU_037562_3_2_11"/>
<dbReference type="Proteomes" id="UP000001306">
    <property type="component" value="Chromosome"/>
</dbReference>
<dbReference type="GO" id="GO:1990904">
    <property type="term" value="C:ribonucleoprotein complex"/>
    <property type="evidence" value="ECO:0007669"/>
    <property type="project" value="UniProtKB-KW"/>
</dbReference>
<dbReference type="GO" id="GO:0005840">
    <property type="term" value="C:ribosome"/>
    <property type="evidence" value="ECO:0007669"/>
    <property type="project" value="UniProtKB-KW"/>
</dbReference>
<dbReference type="GO" id="GO:0019843">
    <property type="term" value="F:rRNA binding"/>
    <property type="evidence" value="ECO:0007669"/>
    <property type="project" value="UniProtKB-UniRule"/>
</dbReference>
<dbReference type="GO" id="GO:0003735">
    <property type="term" value="F:structural constituent of ribosome"/>
    <property type="evidence" value="ECO:0007669"/>
    <property type="project" value="InterPro"/>
</dbReference>
<dbReference type="GO" id="GO:0006412">
    <property type="term" value="P:translation"/>
    <property type="evidence" value="ECO:0007669"/>
    <property type="project" value="UniProtKB-UniRule"/>
</dbReference>
<dbReference type="FunFam" id="3.30.70.330:FF:000001">
    <property type="entry name" value="50S ribosomal protein L23"/>
    <property type="match status" value="1"/>
</dbReference>
<dbReference type="Gene3D" id="3.30.70.330">
    <property type="match status" value="1"/>
</dbReference>
<dbReference type="HAMAP" id="MF_01369_B">
    <property type="entry name" value="Ribosomal_uL23_B"/>
    <property type="match status" value="1"/>
</dbReference>
<dbReference type="InterPro" id="IPR012677">
    <property type="entry name" value="Nucleotide-bd_a/b_plait_sf"/>
</dbReference>
<dbReference type="InterPro" id="IPR013025">
    <property type="entry name" value="Ribosomal_uL23-like"/>
</dbReference>
<dbReference type="InterPro" id="IPR012678">
    <property type="entry name" value="Ribosomal_uL23/eL15/eS24_sf"/>
</dbReference>
<dbReference type="InterPro" id="IPR001014">
    <property type="entry name" value="Ribosomal_uL23_CS"/>
</dbReference>
<dbReference type="NCBIfam" id="NF004363">
    <property type="entry name" value="PRK05738.2-4"/>
    <property type="match status" value="1"/>
</dbReference>
<dbReference type="NCBIfam" id="NF004364">
    <property type="entry name" value="PRK05738.2-5"/>
    <property type="match status" value="1"/>
</dbReference>
<dbReference type="PANTHER" id="PTHR11620">
    <property type="entry name" value="60S RIBOSOMAL PROTEIN L23A"/>
    <property type="match status" value="1"/>
</dbReference>
<dbReference type="Pfam" id="PF00276">
    <property type="entry name" value="Ribosomal_L23"/>
    <property type="match status" value="1"/>
</dbReference>
<dbReference type="SUPFAM" id="SSF54189">
    <property type="entry name" value="Ribosomal proteins S24e, L23 and L15e"/>
    <property type="match status" value="1"/>
</dbReference>
<dbReference type="PROSITE" id="PS00050">
    <property type="entry name" value="RIBOSOMAL_L23"/>
    <property type="match status" value="1"/>
</dbReference>
<feature type="chain" id="PRO_1000184088" description="Large ribosomal subunit protein uL23">
    <location>
        <begin position="1"/>
        <end position="99"/>
    </location>
</feature>
<proteinExistence type="inferred from homology"/>
<reference key="1">
    <citation type="journal article" date="2004" name="Mol. Plant Microbe Interact.">
        <title>The genome sequence of the Gram-positive sugarcane pathogen Leifsonia xyli subsp. xyli.</title>
        <authorList>
            <person name="Monteiro-Vitorello C.B."/>
            <person name="Camargo L.E.A."/>
            <person name="Van Sluys M.A."/>
            <person name="Kitajima J.P."/>
            <person name="Truffi D."/>
            <person name="do Amaral A.M."/>
            <person name="Harakava R."/>
            <person name="de Oliveira J.C.F."/>
            <person name="Wood D."/>
            <person name="de Oliveira M.C."/>
            <person name="Miyaki C.Y."/>
            <person name="Takita M.A."/>
            <person name="da Silva A.C.R."/>
            <person name="Furlan L.R."/>
            <person name="Carraro D.M."/>
            <person name="Camarotte G."/>
            <person name="Almeida N.F. Jr."/>
            <person name="Carrer H."/>
            <person name="Coutinho L.L."/>
            <person name="El-Dorry H.A."/>
            <person name="Ferro M.I.T."/>
            <person name="Gagliardi P.R."/>
            <person name="Giglioti E."/>
            <person name="Goldman M.H.S."/>
            <person name="Goldman G.H."/>
            <person name="Kimura E.T."/>
            <person name="Ferro E.S."/>
            <person name="Kuramae E.E."/>
            <person name="Lemos E.G.M."/>
            <person name="Lemos M.V.F."/>
            <person name="Mauro S.M.Z."/>
            <person name="Machado M.A."/>
            <person name="Marino C.L."/>
            <person name="Menck C.F."/>
            <person name="Nunes L.R."/>
            <person name="Oliveira R.C."/>
            <person name="Pereira G.G."/>
            <person name="Siqueira W."/>
            <person name="de Souza A.A."/>
            <person name="Tsai S.M."/>
            <person name="Zanca A.S."/>
            <person name="Simpson A.J.G."/>
            <person name="Brumbley S.M."/>
            <person name="Setubal J.C."/>
        </authorList>
    </citation>
    <scope>NUCLEOTIDE SEQUENCE [LARGE SCALE GENOMIC DNA]</scope>
    <source>
        <strain>CTCB07</strain>
    </source>
</reference>
<comment type="function">
    <text evidence="1">One of the early assembly proteins it binds 23S rRNA. One of the proteins that surrounds the polypeptide exit tunnel on the outside of the ribosome. Forms the main docking site for trigger factor binding to the ribosome.</text>
</comment>
<comment type="subunit">
    <text evidence="1">Part of the 50S ribosomal subunit. Contacts protein L29, and trigger factor when it is bound to the ribosome.</text>
</comment>
<comment type="similarity">
    <text evidence="1">Belongs to the universal ribosomal protein uL23 family.</text>
</comment>
<accession>Q6ACZ7</accession>
<sequence>MAAVNKDPRDVIIAPVVSEKSYGLIDEGKYTFLVDPRSNKTEIKLAIESIFRVEVASVNTLNRQGKTRRTKFGLGKRKDTKRAIVTLKSGSIDIFTAVG</sequence>
<organism>
    <name type="scientific">Leifsonia xyli subsp. xyli (strain CTCB07)</name>
    <dbReference type="NCBI Taxonomy" id="281090"/>
    <lineage>
        <taxon>Bacteria</taxon>
        <taxon>Bacillati</taxon>
        <taxon>Actinomycetota</taxon>
        <taxon>Actinomycetes</taxon>
        <taxon>Micrococcales</taxon>
        <taxon>Microbacteriaceae</taxon>
        <taxon>Leifsonia</taxon>
    </lineage>
</organism>
<protein>
    <recommendedName>
        <fullName evidence="1">Large ribosomal subunit protein uL23</fullName>
    </recommendedName>
    <alternativeName>
        <fullName evidence="2">50S ribosomal protein L23</fullName>
    </alternativeName>
</protein>
<keyword id="KW-1185">Reference proteome</keyword>
<keyword id="KW-0687">Ribonucleoprotein</keyword>
<keyword id="KW-0689">Ribosomal protein</keyword>
<keyword id="KW-0694">RNA-binding</keyword>
<keyword id="KW-0699">rRNA-binding</keyword>